<feature type="chain" id="PRO_0000094992" description="UPF0291 protein SAS2460">
    <location>
        <begin position="1"/>
        <end position="76"/>
    </location>
</feature>
<accession>Q6G6A0</accession>
<proteinExistence type="inferred from homology"/>
<dbReference type="EMBL" id="BX571857">
    <property type="protein sequence ID" value="CAG44276.1"/>
    <property type="molecule type" value="Genomic_DNA"/>
</dbReference>
<dbReference type="RefSeq" id="WP_000697134.1">
    <property type="nucleotide sequence ID" value="NC_002953.3"/>
</dbReference>
<dbReference type="SMR" id="Q6G6A0"/>
<dbReference type="KEGG" id="sas:SAS2460"/>
<dbReference type="HOGENOM" id="CLU_173137_0_2_9"/>
<dbReference type="GO" id="GO:0005737">
    <property type="term" value="C:cytoplasm"/>
    <property type="evidence" value="ECO:0007669"/>
    <property type="project" value="UniProtKB-SubCell"/>
</dbReference>
<dbReference type="Gene3D" id="1.10.287.540">
    <property type="entry name" value="Helix hairpin bin"/>
    <property type="match status" value="1"/>
</dbReference>
<dbReference type="HAMAP" id="MF_01103">
    <property type="entry name" value="UPF0291"/>
    <property type="match status" value="1"/>
</dbReference>
<dbReference type="InterPro" id="IPR009242">
    <property type="entry name" value="DUF896"/>
</dbReference>
<dbReference type="PANTHER" id="PTHR37300:SF2">
    <property type="entry name" value="UPF0291 PROTEIN BC_1827"/>
    <property type="match status" value="1"/>
</dbReference>
<dbReference type="PANTHER" id="PTHR37300">
    <property type="entry name" value="UPF0291 PROTEIN CBO2609/CLC_2481"/>
    <property type="match status" value="1"/>
</dbReference>
<dbReference type="Pfam" id="PF05979">
    <property type="entry name" value="DUF896"/>
    <property type="match status" value="1"/>
</dbReference>
<dbReference type="SUPFAM" id="SSF158221">
    <property type="entry name" value="YnzC-like"/>
    <property type="match status" value="1"/>
</dbReference>
<name>Y2460_STAAS</name>
<comment type="subcellular location">
    <subcellularLocation>
        <location evidence="1">Cytoplasm</location>
    </subcellularLocation>
</comment>
<comment type="similarity">
    <text evidence="1">Belongs to the UPF0291 family.</text>
</comment>
<sequence length="76" mass="8834">MKILDRINELANKEKVQPLTVAEKQEQHALRQDYLSMIRGQVLTTFSTIKVVDPIGQDVTPDKVYDLRQQYGYIQN</sequence>
<gene>
    <name type="ordered locus">SAS2460</name>
</gene>
<reference key="1">
    <citation type="journal article" date="2004" name="Proc. Natl. Acad. Sci. U.S.A.">
        <title>Complete genomes of two clinical Staphylococcus aureus strains: evidence for the rapid evolution of virulence and drug resistance.</title>
        <authorList>
            <person name="Holden M.T.G."/>
            <person name="Feil E.J."/>
            <person name="Lindsay J.A."/>
            <person name="Peacock S.J."/>
            <person name="Day N.P.J."/>
            <person name="Enright M.C."/>
            <person name="Foster T.J."/>
            <person name="Moore C.E."/>
            <person name="Hurst L."/>
            <person name="Atkin R."/>
            <person name="Barron A."/>
            <person name="Bason N."/>
            <person name="Bentley S.D."/>
            <person name="Chillingworth C."/>
            <person name="Chillingworth T."/>
            <person name="Churcher C."/>
            <person name="Clark L."/>
            <person name="Corton C."/>
            <person name="Cronin A."/>
            <person name="Doggett J."/>
            <person name="Dowd L."/>
            <person name="Feltwell T."/>
            <person name="Hance Z."/>
            <person name="Harris B."/>
            <person name="Hauser H."/>
            <person name="Holroyd S."/>
            <person name="Jagels K."/>
            <person name="James K.D."/>
            <person name="Lennard N."/>
            <person name="Line A."/>
            <person name="Mayes R."/>
            <person name="Moule S."/>
            <person name="Mungall K."/>
            <person name="Ormond D."/>
            <person name="Quail M.A."/>
            <person name="Rabbinowitsch E."/>
            <person name="Rutherford K.M."/>
            <person name="Sanders M."/>
            <person name="Sharp S."/>
            <person name="Simmonds M."/>
            <person name="Stevens K."/>
            <person name="Whitehead S."/>
            <person name="Barrell B.G."/>
            <person name="Spratt B.G."/>
            <person name="Parkhill J."/>
        </authorList>
    </citation>
    <scope>NUCLEOTIDE SEQUENCE [LARGE SCALE GENOMIC DNA]</scope>
    <source>
        <strain>MSSA476</strain>
    </source>
</reference>
<organism>
    <name type="scientific">Staphylococcus aureus (strain MSSA476)</name>
    <dbReference type="NCBI Taxonomy" id="282459"/>
    <lineage>
        <taxon>Bacteria</taxon>
        <taxon>Bacillati</taxon>
        <taxon>Bacillota</taxon>
        <taxon>Bacilli</taxon>
        <taxon>Bacillales</taxon>
        <taxon>Staphylococcaceae</taxon>
        <taxon>Staphylococcus</taxon>
    </lineage>
</organism>
<protein>
    <recommendedName>
        <fullName evidence="1">UPF0291 protein SAS2460</fullName>
    </recommendedName>
</protein>
<evidence type="ECO:0000255" key="1">
    <source>
        <dbReference type="HAMAP-Rule" id="MF_01103"/>
    </source>
</evidence>
<keyword id="KW-0963">Cytoplasm</keyword>